<dbReference type="EMBL" id="GQ477351">
    <property type="protein sequence ID" value="ACY74344.1"/>
    <property type="molecule type" value="mRNA"/>
</dbReference>
<dbReference type="EMBL" id="AK008016">
    <property type="protein sequence ID" value="BAB25410.1"/>
    <property type="molecule type" value="mRNA"/>
</dbReference>
<dbReference type="EMBL" id="AK088094">
    <property type="protein sequence ID" value="BAC40141.1"/>
    <property type="molecule type" value="mRNA"/>
</dbReference>
<dbReference type="EMBL" id="BC030674">
    <property type="protein sequence ID" value="AAH30674.1"/>
    <property type="molecule type" value="mRNA"/>
</dbReference>
<dbReference type="EMBL" id="BC064044">
    <property type="protein sequence ID" value="AAH64044.1"/>
    <property type="molecule type" value="mRNA"/>
</dbReference>
<dbReference type="CCDS" id="CCDS29145.1"/>
<dbReference type="RefSeq" id="NP_081498.2">
    <property type="nucleotide sequence ID" value="NM_027222.3"/>
</dbReference>
<dbReference type="SMR" id="Q9D8I1"/>
<dbReference type="CORUM" id="Q9D8I1"/>
<dbReference type="DIP" id="DIP-48984N"/>
<dbReference type="FunCoup" id="Q9D8I1">
    <property type="interactions" value="32"/>
</dbReference>
<dbReference type="IntAct" id="Q9D8I1">
    <property type="interactions" value="1"/>
</dbReference>
<dbReference type="STRING" id="10090.ENSMUSP00000025211"/>
<dbReference type="ChEMBL" id="CHEMBL3259485"/>
<dbReference type="PhosphoSitePlus" id="Q9D8I1"/>
<dbReference type="PaxDb" id="10090-ENSMUSP00000025211"/>
<dbReference type="PeptideAtlas" id="Q9D8I1"/>
<dbReference type="ProteomicsDB" id="252633"/>
<dbReference type="Antibodypedia" id="26772">
    <property type="antibodies" value="124 antibodies from 24 providers"/>
</dbReference>
<dbReference type="DNASU" id="69816"/>
<dbReference type="Ensembl" id="ENSMUST00000025211.6">
    <property type="protein sequence ID" value="ENSMUSP00000025211.5"/>
    <property type="gene ID" value="ENSMUSG00000024353.6"/>
</dbReference>
<dbReference type="GeneID" id="69816"/>
<dbReference type="KEGG" id="mmu:69816"/>
<dbReference type="UCSC" id="uc008emm.2">
    <property type="organism name" value="mouse"/>
</dbReference>
<dbReference type="AGR" id="MGI:1917066"/>
<dbReference type="CTD" id="51237"/>
<dbReference type="MGI" id="MGI:1917066">
    <property type="gene designation" value="Mzb1"/>
</dbReference>
<dbReference type="VEuPathDB" id="HostDB:ENSMUSG00000024353"/>
<dbReference type="eggNOG" id="ENOG502S4B7">
    <property type="taxonomic scope" value="Eukaryota"/>
</dbReference>
<dbReference type="GeneTree" id="ENSGT00390000002716"/>
<dbReference type="HOGENOM" id="CLU_113467_1_0_1"/>
<dbReference type="InParanoid" id="Q9D8I1"/>
<dbReference type="OMA" id="QNWQDYG"/>
<dbReference type="OrthoDB" id="448621at2759"/>
<dbReference type="PhylomeDB" id="Q9D8I1"/>
<dbReference type="TreeFam" id="TF329450"/>
<dbReference type="BioGRID-ORCS" id="69816">
    <property type="hits" value="3 hits in 77 CRISPR screens"/>
</dbReference>
<dbReference type="ChiTaRS" id="Mzb1">
    <property type="organism name" value="mouse"/>
</dbReference>
<dbReference type="PRO" id="PR:Q9D8I1"/>
<dbReference type="Proteomes" id="UP000000589">
    <property type="component" value="Chromosome 18"/>
</dbReference>
<dbReference type="RNAct" id="Q9D8I1">
    <property type="molecule type" value="protein"/>
</dbReference>
<dbReference type="Bgee" id="ENSMUSG00000024353">
    <property type="expression patterns" value="Expressed in spleen and 57 other cell types or tissues"/>
</dbReference>
<dbReference type="ExpressionAtlas" id="Q9D8I1">
    <property type="expression patterns" value="baseline and differential"/>
</dbReference>
<dbReference type="GO" id="GO:0034663">
    <property type="term" value="C:endoplasmic reticulum chaperone complex"/>
    <property type="evidence" value="ECO:0000314"/>
    <property type="project" value="UniProtKB"/>
</dbReference>
<dbReference type="GO" id="GO:0005788">
    <property type="term" value="C:endoplasmic reticulum lumen"/>
    <property type="evidence" value="ECO:0000314"/>
    <property type="project" value="UniProtKB"/>
</dbReference>
<dbReference type="GO" id="GO:0005576">
    <property type="term" value="C:extracellular region"/>
    <property type="evidence" value="ECO:0000314"/>
    <property type="project" value="UniProtKB"/>
</dbReference>
<dbReference type="GO" id="GO:0033622">
    <property type="term" value="P:integrin activation"/>
    <property type="evidence" value="ECO:0000315"/>
    <property type="project" value="UniProtKB"/>
</dbReference>
<dbReference type="GO" id="GO:0008284">
    <property type="term" value="P:positive regulation of cell population proliferation"/>
    <property type="evidence" value="ECO:0000314"/>
    <property type="project" value="UniProtKB"/>
</dbReference>
<dbReference type="GO" id="GO:0002639">
    <property type="term" value="P:positive regulation of immunoglobulin production"/>
    <property type="evidence" value="ECO:0000315"/>
    <property type="project" value="UniProtKB"/>
</dbReference>
<dbReference type="GO" id="GO:0030888">
    <property type="term" value="P:regulation of B cell proliferation"/>
    <property type="evidence" value="ECO:0000315"/>
    <property type="project" value="UniProtKB"/>
</dbReference>
<dbReference type="GO" id="GO:0042127">
    <property type="term" value="P:regulation of cell population proliferation"/>
    <property type="evidence" value="ECO:0000315"/>
    <property type="project" value="UniProtKB"/>
</dbReference>
<dbReference type="GO" id="GO:0046626">
    <property type="term" value="P:regulation of insulin receptor signaling pathway"/>
    <property type="evidence" value="ECO:0000314"/>
    <property type="project" value="UniProtKB"/>
</dbReference>
<dbReference type="InterPro" id="IPR021852">
    <property type="entry name" value="DUF3456"/>
</dbReference>
<dbReference type="InterPro" id="IPR052682">
    <property type="entry name" value="MZB1"/>
</dbReference>
<dbReference type="PANTHER" id="PTHR15881">
    <property type="entry name" value="MARGINAL ZONE B- AND B1-CELL-SPECIFIC PROTEIN"/>
    <property type="match status" value="1"/>
</dbReference>
<dbReference type="PANTHER" id="PTHR15881:SF2">
    <property type="entry name" value="MARGINAL ZONE B- AND B1-CELL-SPECIFIC PROTEIN"/>
    <property type="match status" value="1"/>
</dbReference>
<dbReference type="Pfam" id="PF11938">
    <property type="entry name" value="DUF3456"/>
    <property type="match status" value="1"/>
</dbReference>
<dbReference type="PROSITE" id="PS00014">
    <property type="entry name" value="ER_TARGET"/>
    <property type="match status" value="1"/>
</dbReference>
<proteinExistence type="evidence at protein level"/>
<comment type="function">
    <text>Associates with immunoglobulin M (IgM) heavy and light chains and promotes IgM assembly and secretion. May exert its effect by acting as a molecular chaperone or as an oxidoreductase as it displays a low level of oxidoreductase activity. Helps to diversify peripheral B-cell functions by regulating Ca(2+) stores, antibody secretion and integrin activation.</text>
</comment>
<comment type="function">
    <text>Acts as a hormone-regulated adipokine/pro-inflammatory cytokine that is implicated in causing chronic inflammation, affecting cellular expansion and blunting insulin response in adipocytes. May have a role in the onset of insulin resistance.</text>
</comment>
<comment type="subunit">
    <text evidence="4 5">Part of the ER chaperone complex, a multi-protein complex in the endoplasmic reticulum containing a large number of molecular chaperones which associates with unassembled incompletely folded immunoglobulin heavy chains. Interacts with HSP90B1 and PDIA3 in a calcium-dependent manner.</text>
</comment>
<comment type="subcellular location">
    <subcellularLocation>
        <location evidence="3">Endoplasmic reticulum</location>
    </subcellularLocation>
    <subcellularLocation>
        <location evidence="5">Endoplasmic reticulum lumen</location>
    </subcellularLocation>
    <subcellularLocation>
        <location evidence="6">Secreted</location>
    </subcellularLocation>
</comment>
<comment type="tissue specificity">
    <text evidence="3 5 6">Expressed predominantly in the spleen and lymph nodes. Abundantly expressed in marginal zone B and B1 cells. High expression in mesenteric adipose tissue (MAT). Expressed also in pancreas, perigonadal adipose tissue (PAT), uterus, subcutaneous adipose tissue, heart, muscle, ovary and liver. Very low expression is detected in brown adipose tissue. In PAT, significantly higher expression in stromal-vascular cell than in adipocytes. Expressed in macrophage RAW 264.7 cell line. Down-regulated in For-knockout female MAT at 5 months (obese state) followed by steep up-regulation at 9 months (prediabetic condition) when mutants progress towards the metabolic syndrome.</text>
</comment>
<comment type="developmental stage">
    <text evidence="3 4">Up-regulated during plasma cell differentiation.</text>
</comment>
<comment type="PTM">
    <text>Forms an interchain disulfide bond with IgM monomers.</text>
</comment>
<comment type="similarity">
    <text evidence="7">Belongs to the MZB1 family.</text>
</comment>
<feature type="signal peptide" evidence="1">
    <location>
        <begin position="1"/>
        <end position="20"/>
    </location>
</feature>
<feature type="chain" id="PRO_0000318741" description="Marginal zone B- and B1-cell-specific protein">
    <location>
        <begin position="21"/>
        <end position="188"/>
    </location>
</feature>
<feature type="short sequence motif" description="Prevents secretion from ER" evidence="2">
    <location>
        <begin position="185"/>
        <end position="188"/>
    </location>
</feature>
<feature type="disulfide bond" evidence="3">
    <location>
        <begin position="49"/>
        <end position="177"/>
    </location>
</feature>
<feature type="disulfide bond" evidence="3">
    <location>
        <begin position="52"/>
        <end position="170"/>
    </location>
</feature>
<feature type="disulfide bond" evidence="3">
    <location>
        <begin position="94"/>
        <end position="142"/>
    </location>
</feature>
<feature type="mutagenesis site" description="Reduced electrophoretic mobility; when associated with A-52." evidence="3">
    <original>C</original>
    <variation>A</variation>
    <location>
        <position position="49"/>
    </location>
</feature>
<feature type="mutagenesis site" description="Reduced electrophoretic mobility; when associated with A-49." evidence="3">
    <original>C</original>
    <variation>A</variation>
    <location>
        <position position="52"/>
    </location>
</feature>
<feature type="mutagenesis site" description="Small loss of electrophoretic mobility." evidence="3">
    <original>C</original>
    <variation>A</variation>
    <location>
        <position position="94"/>
    </location>
</feature>
<feature type="mutagenesis site" description="Small loss of electrophoretic mobility." evidence="3">
    <original>C</original>
    <variation>A</variation>
    <location>
        <position position="142"/>
    </location>
</feature>
<feature type="mutagenesis site" description="Reduced electrophoretic mobility; when associated with A-177." evidence="3">
    <original>C</original>
    <variation>A</variation>
    <location>
        <position position="170"/>
    </location>
</feature>
<feature type="mutagenesis site" description="Reduced electrophoretic mobility; when associated with A-170." evidence="3">
    <original>C</original>
    <variation>A</variation>
    <location>
        <position position="177"/>
    </location>
</feature>
<feature type="sequence conflict" description="In Ref. 2; BAC40141." evidence="7" ref="2">
    <original>P</original>
    <variation>T</variation>
    <location>
        <position position="6"/>
    </location>
</feature>
<feature type="sequence conflict" description="In Ref. 1; ACY74344 and 2; BAB25410." evidence="7" ref="1 2">
    <original>F</original>
    <variation>L</variation>
    <location>
        <position position="11"/>
    </location>
</feature>
<feature type="sequence conflict" description="In Ref. 1; ACY74344 and 2; BAB25410." evidence="7" ref="1 2">
    <original>P</original>
    <variation>H</variation>
    <location>
        <position position="31"/>
    </location>
</feature>
<feature type="sequence conflict" description="In Ref. 2; BAB25410." evidence="7" ref="2">
    <original>N</original>
    <variation>S</variation>
    <location>
        <position position="136"/>
    </location>
</feature>
<accession>Q9D8I1</accession>
<accession>D2IYS1</accession>
<accession>Q6P3D3</accession>
<accession>Q8BU13</accession>
<accession>Q8K2M5</accession>
<gene>
    <name type="primary">Mzb1</name>
    <name type="synonym">Pacap</name>
</gene>
<reference key="1">
    <citation type="journal article" date="2009" name="Proc. Natl. Acad. Sci. U.S.A.">
        <title>pERp1 is significantly up-regulated during plasma cell differentiation and contributes to the oxidative folding of immunoglobulin.</title>
        <authorList>
            <person name="Shimizu Y."/>
            <person name="Meunier L."/>
            <person name="Hendershot L.M."/>
        </authorList>
    </citation>
    <scope>NUCLEOTIDE SEQUENCE [MRNA]</scope>
    <scope>FUNCTION</scope>
    <scope>IDENTIFICATION IN ER CHAPERONE COMPLEX</scope>
    <scope>DEVELOPMENTAL STAGE</scope>
    <scope>IDENTIFICATION BY MASS SPECTROMETRY</scope>
</reference>
<reference key="2">
    <citation type="journal article" date="2005" name="Science">
        <title>The transcriptional landscape of the mammalian genome.</title>
        <authorList>
            <person name="Carninci P."/>
            <person name="Kasukawa T."/>
            <person name="Katayama S."/>
            <person name="Gough J."/>
            <person name="Frith M.C."/>
            <person name="Maeda N."/>
            <person name="Oyama R."/>
            <person name="Ravasi T."/>
            <person name="Lenhard B."/>
            <person name="Wells C."/>
            <person name="Kodzius R."/>
            <person name="Shimokawa K."/>
            <person name="Bajic V.B."/>
            <person name="Brenner S.E."/>
            <person name="Batalov S."/>
            <person name="Forrest A.R."/>
            <person name="Zavolan M."/>
            <person name="Davis M.J."/>
            <person name="Wilming L.G."/>
            <person name="Aidinis V."/>
            <person name="Allen J.E."/>
            <person name="Ambesi-Impiombato A."/>
            <person name="Apweiler R."/>
            <person name="Aturaliya R.N."/>
            <person name="Bailey T.L."/>
            <person name="Bansal M."/>
            <person name="Baxter L."/>
            <person name="Beisel K.W."/>
            <person name="Bersano T."/>
            <person name="Bono H."/>
            <person name="Chalk A.M."/>
            <person name="Chiu K.P."/>
            <person name="Choudhary V."/>
            <person name="Christoffels A."/>
            <person name="Clutterbuck D.R."/>
            <person name="Crowe M.L."/>
            <person name="Dalla E."/>
            <person name="Dalrymple B.P."/>
            <person name="de Bono B."/>
            <person name="Della Gatta G."/>
            <person name="di Bernardo D."/>
            <person name="Down T."/>
            <person name="Engstrom P."/>
            <person name="Fagiolini M."/>
            <person name="Faulkner G."/>
            <person name="Fletcher C.F."/>
            <person name="Fukushima T."/>
            <person name="Furuno M."/>
            <person name="Futaki S."/>
            <person name="Gariboldi M."/>
            <person name="Georgii-Hemming P."/>
            <person name="Gingeras T.R."/>
            <person name="Gojobori T."/>
            <person name="Green R.E."/>
            <person name="Gustincich S."/>
            <person name="Harbers M."/>
            <person name="Hayashi Y."/>
            <person name="Hensch T.K."/>
            <person name="Hirokawa N."/>
            <person name="Hill D."/>
            <person name="Huminiecki L."/>
            <person name="Iacono M."/>
            <person name="Ikeo K."/>
            <person name="Iwama A."/>
            <person name="Ishikawa T."/>
            <person name="Jakt M."/>
            <person name="Kanapin A."/>
            <person name="Katoh M."/>
            <person name="Kawasawa Y."/>
            <person name="Kelso J."/>
            <person name="Kitamura H."/>
            <person name="Kitano H."/>
            <person name="Kollias G."/>
            <person name="Krishnan S.P."/>
            <person name="Kruger A."/>
            <person name="Kummerfeld S.K."/>
            <person name="Kurochkin I.V."/>
            <person name="Lareau L.F."/>
            <person name="Lazarevic D."/>
            <person name="Lipovich L."/>
            <person name="Liu J."/>
            <person name="Liuni S."/>
            <person name="McWilliam S."/>
            <person name="Madan Babu M."/>
            <person name="Madera M."/>
            <person name="Marchionni L."/>
            <person name="Matsuda H."/>
            <person name="Matsuzawa S."/>
            <person name="Miki H."/>
            <person name="Mignone F."/>
            <person name="Miyake S."/>
            <person name="Morris K."/>
            <person name="Mottagui-Tabar S."/>
            <person name="Mulder N."/>
            <person name="Nakano N."/>
            <person name="Nakauchi H."/>
            <person name="Ng P."/>
            <person name="Nilsson R."/>
            <person name="Nishiguchi S."/>
            <person name="Nishikawa S."/>
            <person name="Nori F."/>
            <person name="Ohara O."/>
            <person name="Okazaki Y."/>
            <person name="Orlando V."/>
            <person name="Pang K.C."/>
            <person name="Pavan W.J."/>
            <person name="Pavesi G."/>
            <person name="Pesole G."/>
            <person name="Petrovsky N."/>
            <person name="Piazza S."/>
            <person name="Reed J."/>
            <person name="Reid J.F."/>
            <person name="Ring B.Z."/>
            <person name="Ringwald M."/>
            <person name="Rost B."/>
            <person name="Ruan Y."/>
            <person name="Salzberg S.L."/>
            <person name="Sandelin A."/>
            <person name="Schneider C."/>
            <person name="Schoenbach C."/>
            <person name="Sekiguchi K."/>
            <person name="Semple C.A."/>
            <person name="Seno S."/>
            <person name="Sessa L."/>
            <person name="Sheng Y."/>
            <person name="Shibata Y."/>
            <person name="Shimada H."/>
            <person name="Shimada K."/>
            <person name="Silva D."/>
            <person name="Sinclair B."/>
            <person name="Sperling S."/>
            <person name="Stupka E."/>
            <person name="Sugiura K."/>
            <person name="Sultana R."/>
            <person name="Takenaka Y."/>
            <person name="Taki K."/>
            <person name="Tammoja K."/>
            <person name="Tan S.L."/>
            <person name="Tang S."/>
            <person name="Taylor M.S."/>
            <person name="Tegner J."/>
            <person name="Teichmann S.A."/>
            <person name="Ueda H.R."/>
            <person name="van Nimwegen E."/>
            <person name="Verardo R."/>
            <person name="Wei C.L."/>
            <person name="Yagi K."/>
            <person name="Yamanishi H."/>
            <person name="Zabarovsky E."/>
            <person name="Zhu S."/>
            <person name="Zimmer A."/>
            <person name="Hide W."/>
            <person name="Bult C."/>
            <person name="Grimmond S.M."/>
            <person name="Teasdale R.D."/>
            <person name="Liu E.T."/>
            <person name="Brusic V."/>
            <person name="Quackenbush J."/>
            <person name="Wahlestedt C."/>
            <person name="Mattick J.S."/>
            <person name="Hume D.A."/>
            <person name="Kai C."/>
            <person name="Sasaki D."/>
            <person name="Tomaru Y."/>
            <person name="Fukuda S."/>
            <person name="Kanamori-Katayama M."/>
            <person name="Suzuki M."/>
            <person name="Aoki J."/>
            <person name="Arakawa T."/>
            <person name="Iida J."/>
            <person name="Imamura K."/>
            <person name="Itoh M."/>
            <person name="Kato T."/>
            <person name="Kawaji H."/>
            <person name="Kawagashira N."/>
            <person name="Kawashima T."/>
            <person name="Kojima M."/>
            <person name="Kondo S."/>
            <person name="Konno H."/>
            <person name="Nakano K."/>
            <person name="Ninomiya N."/>
            <person name="Nishio T."/>
            <person name="Okada M."/>
            <person name="Plessy C."/>
            <person name="Shibata K."/>
            <person name="Shiraki T."/>
            <person name="Suzuki S."/>
            <person name="Tagami M."/>
            <person name="Waki K."/>
            <person name="Watahiki A."/>
            <person name="Okamura-Oho Y."/>
            <person name="Suzuki H."/>
            <person name="Kawai J."/>
            <person name="Hayashizaki Y."/>
        </authorList>
    </citation>
    <scope>NUCLEOTIDE SEQUENCE [LARGE SCALE MRNA]</scope>
    <source>
        <strain>C57BL/6J</strain>
        <strain>NOD</strain>
        <tissue>Small intestine</tissue>
        <tissue>Thymus</tissue>
    </source>
</reference>
<reference key="3">
    <citation type="journal article" date="2004" name="Genome Res.">
        <title>The status, quality, and expansion of the NIH full-length cDNA project: the Mammalian Gene Collection (MGC).</title>
        <authorList>
            <consortium name="The MGC Project Team"/>
        </authorList>
    </citation>
    <scope>NUCLEOTIDE SEQUENCE [LARGE SCALE MRNA]</scope>
    <source>
        <strain>C57BL/6J</strain>
        <tissue>Mammary gland</tissue>
    </source>
</reference>
<reference key="4">
    <citation type="journal article" date="2009" name="Proc. Natl. Acad. Sci. U.S.A.">
        <title>Efficient IgM assembly and secretion require the plasma cell induced endoplasmic reticulum protein pERp1.</title>
        <authorList>
            <person name="van Anken E."/>
            <person name="Pena F."/>
            <person name="Hafkemeijer N."/>
            <person name="Christis C."/>
            <person name="Romijn E.P."/>
            <person name="Grauschopf U."/>
            <person name="Oorschot V.M."/>
            <person name="Pertel T."/>
            <person name="Engels S."/>
            <person name="Ora A."/>
            <person name="Lastun V."/>
            <person name="Glockshuber R."/>
            <person name="Klumperman J."/>
            <person name="Heck A.J."/>
            <person name="Luban J."/>
            <person name="Braakman I."/>
        </authorList>
    </citation>
    <scope>FUNCTION</scope>
    <scope>SUBCELLULAR LOCATION</scope>
    <scope>TISSUE SPECIFICITY</scope>
    <scope>DEVELOPMENTAL STAGE</scope>
    <scope>DISULFIDE BONDS</scope>
    <scope>MUTAGENESIS OF CYS-49; CYS-52; CYS-94; CYS-142; CYS-170 AND CYS-177</scope>
    <scope>IDENTIFICATION BY MASS SPECTROMETRY</scope>
</reference>
<reference key="5">
    <citation type="journal article" date="2010" name="Cell">
        <title>A tissue-specific atlas of mouse protein phosphorylation and expression.</title>
        <authorList>
            <person name="Huttlin E.L."/>
            <person name="Jedrychowski M.P."/>
            <person name="Elias J.E."/>
            <person name="Goswami T."/>
            <person name="Rad R."/>
            <person name="Beausoleil S.A."/>
            <person name="Villen J."/>
            <person name="Haas W."/>
            <person name="Sowa M.E."/>
            <person name="Gygi S.P."/>
        </authorList>
    </citation>
    <scope>IDENTIFICATION BY MASS SPECTROMETRY [LARGE SCALE ANALYSIS]</scope>
    <source>
        <tissue>Spleen</tissue>
    </source>
</reference>
<reference key="6">
    <citation type="journal article" date="2010" name="Immunity">
        <title>Mzb1 protein regulates calcium homeostasis, antibody secretion, and integrin activation in innate-like B cells.</title>
        <authorList>
            <person name="Flach H."/>
            <person name="Rosenbaum M."/>
            <person name="Duchniewicz M."/>
            <person name="Kim S."/>
            <person name="Zhang S.L."/>
            <person name="Cahalan M.D."/>
            <person name="Mittler G."/>
            <person name="Grosschedl R."/>
        </authorList>
    </citation>
    <scope>TISSUE SPECIFICITY</scope>
    <scope>FUNCTION</scope>
    <scope>SUBCELLULAR LOCATION</scope>
    <scope>IDENTIFICATION BY MASS SPECTROMETRY</scope>
    <scope>INTERACTION WITH HSP90B1 AND PDIA3</scope>
</reference>
<reference key="7">
    <citation type="journal article" date="2011" name="Diabetologia">
        <title>Novel hormone-regulated genes in visceral adipose tissue: cloning and identification of proinflammatory cytokine-like mouse and human MEDA-7: implications for obesity, insulin resistance and the metabolic syndrome.</title>
        <authorList>
            <person name="Zhang H."/>
            <person name="Chen X."/>
            <person name="Sairam M.R."/>
        </authorList>
    </citation>
    <scope>TISSUE SPECIFICITY</scope>
    <scope>SUBCELLULAR LOCATION</scope>
    <scope>FUNCTION</scope>
</reference>
<protein>
    <recommendedName>
        <fullName>Marginal zone B- and B1-cell-specific protein</fullName>
    </recommendedName>
    <alternativeName>
        <fullName>Plasma cell-induced resident endoplasmic reticulum protein</fullName>
        <shortName>Plasma cell-induced resident ER protein</shortName>
        <shortName>pERp1</shortName>
    </alternativeName>
    <alternativeName>
        <fullName>Proapoptotic caspase adapter protein</fullName>
    </alternativeName>
</protein>
<evidence type="ECO:0000255" key="1"/>
<evidence type="ECO:0000255" key="2">
    <source>
        <dbReference type="PROSITE-ProRule" id="PRU10138"/>
    </source>
</evidence>
<evidence type="ECO:0000269" key="3">
    <source>
    </source>
</evidence>
<evidence type="ECO:0000269" key="4">
    <source>
    </source>
</evidence>
<evidence type="ECO:0000269" key="5">
    <source>
    </source>
</evidence>
<evidence type="ECO:0000269" key="6">
    <source>
    </source>
</evidence>
<evidence type="ECO:0000305" key="7"/>
<name>MZB1_MOUSE</name>
<sequence length="188" mass="20580">MRLPLPLLLLFGCRAILGSAGDRVSLSASAPTLDDEEKYSAHMPAHLRCDACRAVAFQMGQRLAKAEAKSHTPDASGLQELSESTYTDVLDQTCSQNWQSYGVHEVNQMKRLTGPGLSKGPEPRISVMISGGPWPNRLSKTCFHYLGEFGEDQIYEAYRQGQANLEALLCGGTHGPCSQEILAQREEL</sequence>
<keyword id="KW-1015">Disulfide bond</keyword>
<keyword id="KW-0256">Endoplasmic reticulum</keyword>
<keyword id="KW-1185">Reference proteome</keyword>
<keyword id="KW-0964">Secreted</keyword>
<keyword id="KW-0732">Signal</keyword>
<organism>
    <name type="scientific">Mus musculus</name>
    <name type="common">Mouse</name>
    <dbReference type="NCBI Taxonomy" id="10090"/>
    <lineage>
        <taxon>Eukaryota</taxon>
        <taxon>Metazoa</taxon>
        <taxon>Chordata</taxon>
        <taxon>Craniata</taxon>
        <taxon>Vertebrata</taxon>
        <taxon>Euteleostomi</taxon>
        <taxon>Mammalia</taxon>
        <taxon>Eutheria</taxon>
        <taxon>Euarchontoglires</taxon>
        <taxon>Glires</taxon>
        <taxon>Rodentia</taxon>
        <taxon>Myomorpha</taxon>
        <taxon>Muroidea</taxon>
        <taxon>Muridae</taxon>
        <taxon>Murinae</taxon>
        <taxon>Mus</taxon>
        <taxon>Mus</taxon>
    </lineage>
</organism>